<proteinExistence type="evidence at transcript level"/>
<evidence type="ECO:0000255" key="1">
    <source>
        <dbReference type="PROSITE-ProRule" id="PRU00541"/>
    </source>
</evidence>
<evidence type="ECO:0000255" key="2">
    <source>
        <dbReference type="PROSITE-ProRule" id="PRU00542"/>
    </source>
</evidence>
<evidence type="ECO:0000269" key="3">
    <source>
    </source>
</evidence>
<evidence type="ECO:0000305" key="4"/>
<evidence type="ECO:0000305" key="5">
    <source>
    </source>
</evidence>
<evidence type="ECO:0000312" key="6">
    <source>
        <dbReference type="EMBL" id="AAS77170.1"/>
    </source>
</evidence>
<evidence type="ECO:0000312" key="7">
    <source>
        <dbReference type="EMBL" id="AAU05261.1"/>
    </source>
</evidence>
<evidence type="ECO:0000312" key="8">
    <source>
        <dbReference type="EMBL" id="AAX12052.1"/>
    </source>
</evidence>
<feature type="chain" id="PRO_0000165214" description="Probable helicase D10">
    <location>
        <begin position="1"/>
        <end position="450"/>
    </location>
</feature>
<feature type="domain" description="Helicase ATP-binding" evidence="1">
    <location>
        <begin position="95"/>
        <end position="240"/>
    </location>
</feature>
<feature type="domain" description="Helicase C-terminal" evidence="2">
    <location>
        <begin position="289"/>
        <end position="439"/>
    </location>
</feature>
<feature type="short sequence motif" description="DEAH box" evidence="1">
    <location>
        <begin position="193"/>
        <end position="196"/>
    </location>
</feature>
<feature type="binding site" evidence="1">
    <location>
        <begin position="108"/>
        <end position="115"/>
    </location>
    <ligand>
        <name>ATP</name>
        <dbReference type="ChEBI" id="CHEBI:30616"/>
    </ligand>
</feature>
<feature type="sequence conflict" description="In Ref. 4; AAU05261." evidence="4" ref="4">
    <original>L</original>
    <variation>F</variation>
    <location>
        <position position="318"/>
    </location>
</feature>
<dbReference type="EC" id="3.6.4.-"/>
<dbReference type="EMBL" id="AY543070">
    <property type="protein sequence ID" value="AAS77170.1"/>
    <property type="molecule type" value="Genomic_DNA"/>
</dbReference>
<dbReference type="EMBL" id="AY692264">
    <property type="protein sequence ID" value="AAU05261.1"/>
    <property type="molecule type" value="Genomic_DNA"/>
</dbReference>
<dbReference type="EMBL" id="AY587007">
    <property type="protein sequence ID" value="AAX12052.1"/>
    <property type="molecule type" value="Genomic_DNA"/>
</dbReference>
<dbReference type="PIR" id="S01931">
    <property type="entry name" value="WABPT5"/>
</dbReference>
<dbReference type="RefSeq" id="YP_006952.1">
    <property type="nucleotide sequence ID" value="NC_005859.1"/>
</dbReference>
<dbReference type="SMR" id="P11107"/>
<dbReference type="GeneID" id="2777605"/>
<dbReference type="KEGG" id="vg:2777605"/>
<dbReference type="Proteomes" id="UP000002107">
    <property type="component" value="Genome"/>
</dbReference>
<dbReference type="Proteomes" id="UP000002141">
    <property type="component" value="Segment"/>
</dbReference>
<dbReference type="Proteomes" id="UP000002503">
    <property type="component" value="Segment"/>
</dbReference>
<dbReference type="GO" id="GO:0005524">
    <property type="term" value="F:ATP binding"/>
    <property type="evidence" value="ECO:0007669"/>
    <property type="project" value="UniProtKB-KW"/>
</dbReference>
<dbReference type="GO" id="GO:0016887">
    <property type="term" value="F:ATP hydrolysis activity"/>
    <property type="evidence" value="ECO:0007669"/>
    <property type="project" value="RHEA"/>
</dbReference>
<dbReference type="GO" id="GO:0008094">
    <property type="term" value="F:ATP-dependent activity, acting on DNA"/>
    <property type="evidence" value="ECO:0000315"/>
    <property type="project" value="CACAO"/>
</dbReference>
<dbReference type="GO" id="GO:0003677">
    <property type="term" value="F:DNA binding"/>
    <property type="evidence" value="ECO:0007669"/>
    <property type="project" value="UniProtKB-KW"/>
</dbReference>
<dbReference type="GO" id="GO:0009378">
    <property type="term" value="F:four-way junction helicase activity"/>
    <property type="evidence" value="ECO:0000314"/>
    <property type="project" value="CACAO"/>
</dbReference>
<dbReference type="Gene3D" id="3.40.50.300">
    <property type="entry name" value="P-loop containing nucleotide triphosphate hydrolases"/>
    <property type="match status" value="2"/>
</dbReference>
<dbReference type="InterPro" id="IPR050615">
    <property type="entry name" value="ATP-dep_DNA_Helicase"/>
</dbReference>
<dbReference type="InterPro" id="IPR006935">
    <property type="entry name" value="Helicase/UvrB_N"/>
</dbReference>
<dbReference type="InterPro" id="IPR014001">
    <property type="entry name" value="Helicase_ATP-bd"/>
</dbReference>
<dbReference type="InterPro" id="IPR001650">
    <property type="entry name" value="Helicase_C-like"/>
</dbReference>
<dbReference type="InterPro" id="IPR027417">
    <property type="entry name" value="P-loop_NTPase"/>
</dbReference>
<dbReference type="PANTHER" id="PTHR11274:SF0">
    <property type="entry name" value="GENERAL TRANSCRIPTION AND DNA REPAIR FACTOR IIH HELICASE SUBUNIT XPB"/>
    <property type="match status" value="1"/>
</dbReference>
<dbReference type="PANTHER" id="PTHR11274">
    <property type="entry name" value="RAD25/XP-B DNA REPAIR HELICASE"/>
    <property type="match status" value="1"/>
</dbReference>
<dbReference type="Pfam" id="PF00271">
    <property type="entry name" value="Helicase_C"/>
    <property type="match status" value="1"/>
</dbReference>
<dbReference type="Pfam" id="PF04851">
    <property type="entry name" value="ResIII"/>
    <property type="match status" value="1"/>
</dbReference>
<dbReference type="SMART" id="SM00487">
    <property type="entry name" value="DEXDc"/>
    <property type="match status" value="1"/>
</dbReference>
<dbReference type="SMART" id="SM00490">
    <property type="entry name" value="HELICc"/>
    <property type="match status" value="1"/>
</dbReference>
<dbReference type="SUPFAM" id="SSF52540">
    <property type="entry name" value="P-loop containing nucleoside triphosphate hydrolases"/>
    <property type="match status" value="1"/>
</dbReference>
<dbReference type="PROSITE" id="PS51192">
    <property type="entry name" value="HELICASE_ATP_BIND_1"/>
    <property type="match status" value="1"/>
</dbReference>
<dbReference type="PROSITE" id="PS51194">
    <property type="entry name" value="HELICASE_CTER"/>
    <property type="match status" value="1"/>
</dbReference>
<organism>
    <name type="scientific">Escherichia phage T5</name>
    <name type="common">Enterobacteria phage T5</name>
    <dbReference type="NCBI Taxonomy" id="2695836"/>
    <lineage>
        <taxon>Viruses</taxon>
        <taxon>Duplodnaviria</taxon>
        <taxon>Heunggongvirae</taxon>
        <taxon>Uroviricota</taxon>
        <taxon>Caudoviricetes</taxon>
        <taxon>Demerecviridae</taxon>
        <taxon>Markadamsvirinae</taxon>
        <taxon>Tequintavirus</taxon>
        <taxon>Tequintavirus T5</taxon>
    </lineage>
</organism>
<accession>P11107</accession>
<accession>Q5DMH9</accession>
<accession>Q66LU1</accession>
<organismHost>
    <name type="scientific">Escherichia coli</name>
    <dbReference type="NCBI Taxonomy" id="562"/>
</organismHost>
<comment type="catalytic activity">
    <reaction>
        <text>ATP + H2O = ADP + phosphate + H(+)</text>
        <dbReference type="Rhea" id="RHEA:13065"/>
        <dbReference type="ChEBI" id="CHEBI:15377"/>
        <dbReference type="ChEBI" id="CHEBI:15378"/>
        <dbReference type="ChEBI" id="CHEBI:30616"/>
        <dbReference type="ChEBI" id="CHEBI:43474"/>
        <dbReference type="ChEBI" id="CHEBI:456216"/>
    </reaction>
</comment>
<comment type="induction">
    <text evidence="3 5">Expressed in the early phase of the viral replicative cycle.</text>
</comment>
<sequence>MKVVISNKAYFKPDDELWDYCSKQTTYHIETMTSKYPIMYKNSGVVAKEIKWIPITRLDLLDAKGIKYELVDKRTLAPVDIPKPKFKLREEDQLPIYEECDDTCIINGKPGFGKTILALALAYKFGQKTLVICTNTSIREMWAAEVRKWFGFEPGIIGSGKYNIDPPIVVSNIQTVNKHANNLSKVFGTVIVDEVHHCVATTFTNFLEISCARYKIGLSGTLKRKDGLQVMFKDFFGYKIFSPPVNNTVAPTIHRYSVPVELSGNQNVPWALRANDVYNHPEYRETIINLAHLYVNMGHKVLIVSDRTELIQTILEALTQRGVTTYEIIGATHLDDRLKIQEDIAKGGPCVLAAAQSIFSEGISLNELSCLIMGSLINNESLIEQLAGRVQRIVEGKLDPIVVDLIMKGGTGLRQASGRMAVYRNNGWKTITMTPEKAVQLAKIAFGNSS</sequence>
<reference key="1">
    <citation type="journal article" date="1988" name="Nucleic Acids Res.">
        <title>The nucleotide sequence of the region of bacteriophage T5 early genes D10-D15.</title>
        <authorList>
            <person name="Kaliman A.V."/>
            <person name="Kryukov V.M."/>
            <person name="Bayev A.A."/>
        </authorList>
    </citation>
    <scope>NUCLEOTIDE SEQUENCE [GENOMIC DNA]</scope>
    <scope>INDUCTION</scope>
</reference>
<reference key="2">
    <citation type="submission" date="2004-01" db="EMBL/GenBank/DDBJ databases">
        <title>Bacteriophage T5 complete genome.</title>
        <authorList>
            <person name="Ksenzenko V.N."/>
            <person name="Kaliman A.V."/>
            <person name="Krutilina A.I."/>
            <person name="Shlyapnikov M.G."/>
        </authorList>
    </citation>
    <scope>NUCLEOTIDE SEQUENCE [LARGE SCALE GENOMIC DNA]</scope>
</reference>
<reference key="3">
    <citation type="journal article" date="2005" name="Virology">
        <title>Complete genome sequence of bacteriophage T5.</title>
        <authorList>
            <person name="Wang J."/>
            <person name="Jiang Y."/>
            <person name="Vincent M."/>
            <person name="Sun Y."/>
            <person name="Yu H."/>
            <person name="Wang J."/>
            <person name="Bao Q."/>
            <person name="Kong H."/>
            <person name="Hu S."/>
        </authorList>
    </citation>
    <scope>NUCLEOTIDE SEQUENCE [LARGE SCALE GENOMIC DNA]</scope>
    <scope>INDUCTION</scope>
    <source>
        <strain evidence="8">ATCC 11303-B5</strain>
    </source>
</reference>
<reference key="4">
    <citation type="journal article" date="2014" name="J. Virol.">
        <title>Insights into bacteriophage T5 structure from analysis of its morphogenesis genes and protein components.</title>
        <authorList>
            <person name="Zivanovic Y."/>
            <person name="Confalonieri F."/>
            <person name="Ponchon L."/>
            <person name="Lurz R."/>
            <person name="Chami M."/>
            <person name="Flayhan A."/>
            <person name="Renouard M."/>
            <person name="Huet A."/>
            <person name="Decottignies P."/>
            <person name="Davidson A.R."/>
            <person name="Breyton C."/>
            <person name="Boulanger P."/>
        </authorList>
    </citation>
    <scope>NUCLEOTIDE SEQUENCE [LARGE SCALE GENOMIC DNA]</scope>
    <source>
        <strain>St0 deletion mutant</strain>
    </source>
</reference>
<reference key="5">
    <citation type="journal article" date="1989" name="FEBS Lett.">
        <title>Two early genes of bacteriophage T5 encode proteins containing an NTP-binding sequence motif and probably involved in DNA replication, recombination and repair.</title>
        <authorList>
            <person name="Blinov V.M."/>
            <person name="Koonin E.V."/>
            <person name="Gorbalenya A.E."/>
            <person name="Kaliman A.V."/>
            <person name="Kryukov V.M."/>
        </authorList>
    </citation>
    <scope>PROBABLE FUNCTION</scope>
</reference>
<name>HEL10_BPT5</name>
<keyword id="KW-0067">ATP-binding</keyword>
<keyword id="KW-0238">DNA-binding</keyword>
<keyword id="KW-0244">Early protein</keyword>
<keyword id="KW-0347">Helicase</keyword>
<keyword id="KW-0378">Hydrolase</keyword>
<keyword id="KW-0547">Nucleotide-binding</keyword>
<keyword id="KW-1185">Reference proteome</keyword>
<gene>
    <name type="primary">D10</name>
    <name evidence="6" type="ORF">T5.124</name>
    <name evidence="7" type="ORF">T5p122</name>
</gene>
<protein>
    <recommendedName>
        <fullName evidence="8">Probable helicase D10</fullName>
        <ecNumber>3.6.4.-</ecNumber>
    </recommendedName>
    <alternativeName>
        <fullName>Protein D10</fullName>
    </alternativeName>
</protein>